<organism>
    <name type="scientific">Pectobacterium atrosepticum (strain SCRI 1043 / ATCC BAA-672)</name>
    <name type="common">Erwinia carotovora subsp. atroseptica</name>
    <dbReference type="NCBI Taxonomy" id="218491"/>
    <lineage>
        <taxon>Bacteria</taxon>
        <taxon>Pseudomonadati</taxon>
        <taxon>Pseudomonadota</taxon>
        <taxon>Gammaproteobacteria</taxon>
        <taxon>Enterobacterales</taxon>
        <taxon>Pectobacteriaceae</taxon>
        <taxon>Pectobacterium</taxon>
    </lineage>
</organism>
<keyword id="KW-0963">Cytoplasm</keyword>
<keyword id="KW-0444">Lipid biosynthesis</keyword>
<keyword id="KW-0443">Lipid metabolism</keyword>
<keyword id="KW-0594">Phospholipid biosynthesis</keyword>
<keyword id="KW-1208">Phospholipid metabolism</keyword>
<keyword id="KW-1185">Reference proteome</keyword>
<keyword id="KW-0808">Transferase</keyword>
<name>PLSX_PECAS</name>
<dbReference type="EC" id="2.3.1.274" evidence="1"/>
<dbReference type="EMBL" id="BX950851">
    <property type="protein sequence ID" value="CAG74699.1"/>
    <property type="molecule type" value="Genomic_DNA"/>
</dbReference>
<dbReference type="RefSeq" id="WP_011093370.1">
    <property type="nucleotide sequence ID" value="NC_004547.2"/>
</dbReference>
<dbReference type="SMR" id="Q6D691"/>
<dbReference type="STRING" id="218491.ECA1794"/>
<dbReference type="KEGG" id="eca:ECA1794"/>
<dbReference type="PATRIC" id="fig|218491.5.peg.1822"/>
<dbReference type="eggNOG" id="COG0416">
    <property type="taxonomic scope" value="Bacteria"/>
</dbReference>
<dbReference type="HOGENOM" id="CLU_039379_1_0_6"/>
<dbReference type="OrthoDB" id="9806408at2"/>
<dbReference type="UniPathway" id="UPA00085"/>
<dbReference type="Proteomes" id="UP000007966">
    <property type="component" value="Chromosome"/>
</dbReference>
<dbReference type="GO" id="GO:0005737">
    <property type="term" value="C:cytoplasm"/>
    <property type="evidence" value="ECO:0007669"/>
    <property type="project" value="UniProtKB-SubCell"/>
</dbReference>
<dbReference type="GO" id="GO:0043811">
    <property type="term" value="F:phosphate:acyl-[acyl carrier protein] acyltransferase activity"/>
    <property type="evidence" value="ECO:0007669"/>
    <property type="project" value="UniProtKB-UniRule"/>
</dbReference>
<dbReference type="GO" id="GO:0006633">
    <property type="term" value="P:fatty acid biosynthetic process"/>
    <property type="evidence" value="ECO:0007669"/>
    <property type="project" value="UniProtKB-UniRule"/>
</dbReference>
<dbReference type="GO" id="GO:0008654">
    <property type="term" value="P:phospholipid biosynthetic process"/>
    <property type="evidence" value="ECO:0007669"/>
    <property type="project" value="UniProtKB-KW"/>
</dbReference>
<dbReference type="FunFam" id="3.40.718.10:FF:000008">
    <property type="entry name" value="Phosphate acyltransferase"/>
    <property type="match status" value="1"/>
</dbReference>
<dbReference type="Gene3D" id="3.40.718.10">
    <property type="entry name" value="Isopropylmalate Dehydrogenase"/>
    <property type="match status" value="1"/>
</dbReference>
<dbReference type="HAMAP" id="MF_00019">
    <property type="entry name" value="PlsX"/>
    <property type="match status" value="1"/>
</dbReference>
<dbReference type="InterPro" id="IPR003664">
    <property type="entry name" value="FA_synthesis"/>
</dbReference>
<dbReference type="InterPro" id="IPR012281">
    <property type="entry name" value="Phospholipid_synth_PlsX-like"/>
</dbReference>
<dbReference type="NCBIfam" id="TIGR00182">
    <property type="entry name" value="plsX"/>
    <property type="match status" value="1"/>
</dbReference>
<dbReference type="PANTHER" id="PTHR30100">
    <property type="entry name" value="FATTY ACID/PHOSPHOLIPID SYNTHESIS PROTEIN PLSX"/>
    <property type="match status" value="1"/>
</dbReference>
<dbReference type="PANTHER" id="PTHR30100:SF1">
    <property type="entry name" value="PHOSPHATE ACYLTRANSFERASE"/>
    <property type="match status" value="1"/>
</dbReference>
<dbReference type="Pfam" id="PF02504">
    <property type="entry name" value="FA_synthesis"/>
    <property type="match status" value="1"/>
</dbReference>
<dbReference type="PIRSF" id="PIRSF002465">
    <property type="entry name" value="Phsphlp_syn_PlsX"/>
    <property type="match status" value="1"/>
</dbReference>
<dbReference type="SUPFAM" id="SSF53659">
    <property type="entry name" value="Isocitrate/Isopropylmalate dehydrogenase-like"/>
    <property type="match status" value="1"/>
</dbReference>
<gene>
    <name evidence="1" type="primary">plsX</name>
    <name type="ordered locus">ECA1794</name>
</gene>
<proteinExistence type="inferred from homology"/>
<feature type="chain" id="PRO_0000189879" description="Phosphate acyltransferase">
    <location>
        <begin position="1"/>
        <end position="348"/>
    </location>
</feature>
<sequence>MTRLTLALDAMGGDFGPCVTVPAALQALASNPALNLLLVGDPAAITPLLAKVDSDLLSRLEVVPAESVIASDARPSQAIRASRGTSMRIALELIKDGRAQACVSAGNTGALMGLAKLLIKPLEGIERPALVSVLPHQQHGKTVVLDLGANVECDSTMLVQFAVMGSVMAEEVLELTNPRVALLNIGEEESKGLSTIREAAAQLKETPSINYIGYLEGNDLLTGKTDVMVCDGFVGNVTLKTVEGVVRMFLSLLKSPASGPEQKQKRSWWLKWLGRLLQKRLSKRFGHLNPDQYNGACLLGLRGTVIKSHGAANQRAFAVAIEQAMQTVRRQLPERIAARLEAVLPKSD</sequence>
<accession>Q6D691</accession>
<comment type="function">
    <text evidence="1">Catalyzes the reversible formation of acyl-phosphate (acyl-PO(4)) from acyl-[acyl-carrier-protein] (acyl-ACP). This enzyme utilizes acyl-ACP as fatty acyl donor, but not acyl-CoA.</text>
</comment>
<comment type="catalytic activity">
    <reaction evidence="1">
        <text>a fatty acyl-[ACP] + phosphate = an acyl phosphate + holo-[ACP]</text>
        <dbReference type="Rhea" id="RHEA:42292"/>
        <dbReference type="Rhea" id="RHEA-COMP:9685"/>
        <dbReference type="Rhea" id="RHEA-COMP:14125"/>
        <dbReference type="ChEBI" id="CHEBI:43474"/>
        <dbReference type="ChEBI" id="CHEBI:59918"/>
        <dbReference type="ChEBI" id="CHEBI:64479"/>
        <dbReference type="ChEBI" id="CHEBI:138651"/>
        <dbReference type="EC" id="2.3.1.274"/>
    </reaction>
</comment>
<comment type="pathway">
    <text evidence="1">Lipid metabolism; phospholipid metabolism.</text>
</comment>
<comment type="subunit">
    <text evidence="1">Homodimer. Probably interacts with PlsY.</text>
</comment>
<comment type="subcellular location">
    <subcellularLocation>
        <location evidence="1">Cytoplasm</location>
    </subcellularLocation>
    <text evidence="1">Associated with the membrane possibly through PlsY.</text>
</comment>
<comment type="similarity">
    <text evidence="1">Belongs to the PlsX family.</text>
</comment>
<protein>
    <recommendedName>
        <fullName evidence="1">Phosphate acyltransferase</fullName>
        <ecNumber evidence="1">2.3.1.274</ecNumber>
    </recommendedName>
    <alternativeName>
        <fullName evidence="1">Acyl-ACP phosphotransacylase</fullName>
    </alternativeName>
    <alternativeName>
        <fullName evidence="1">Acyl-[acyl-carrier-protein]--phosphate acyltransferase</fullName>
    </alternativeName>
    <alternativeName>
        <fullName evidence="1">Phosphate-acyl-ACP acyltransferase</fullName>
    </alternativeName>
</protein>
<evidence type="ECO:0000255" key="1">
    <source>
        <dbReference type="HAMAP-Rule" id="MF_00019"/>
    </source>
</evidence>
<reference key="1">
    <citation type="journal article" date="2004" name="Proc. Natl. Acad. Sci. U.S.A.">
        <title>Genome sequence of the enterobacterial phytopathogen Erwinia carotovora subsp. atroseptica and characterization of virulence factors.</title>
        <authorList>
            <person name="Bell K.S."/>
            <person name="Sebaihia M."/>
            <person name="Pritchard L."/>
            <person name="Holden M.T.G."/>
            <person name="Hyman L.J."/>
            <person name="Holeva M.C."/>
            <person name="Thomson N.R."/>
            <person name="Bentley S.D."/>
            <person name="Churcher L.J.C."/>
            <person name="Mungall K."/>
            <person name="Atkin R."/>
            <person name="Bason N."/>
            <person name="Brooks K."/>
            <person name="Chillingworth T."/>
            <person name="Clark K."/>
            <person name="Doggett J."/>
            <person name="Fraser A."/>
            <person name="Hance Z."/>
            <person name="Hauser H."/>
            <person name="Jagels K."/>
            <person name="Moule S."/>
            <person name="Norbertczak H."/>
            <person name="Ormond D."/>
            <person name="Price C."/>
            <person name="Quail M.A."/>
            <person name="Sanders M."/>
            <person name="Walker D."/>
            <person name="Whitehead S."/>
            <person name="Salmond G.P.C."/>
            <person name="Birch P.R.J."/>
            <person name="Parkhill J."/>
            <person name="Toth I.K."/>
        </authorList>
    </citation>
    <scope>NUCLEOTIDE SEQUENCE [LARGE SCALE GENOMIC DNA]</scope>
    <source>
        <strain>SCRI 1043 / ATCC BAA-672</strain>
    </source>
</reference>